<evidence type="ECO:0000255" key="1">
    <source>
        <dbReference type="HAMAP-Rule" id="MF_00540"/>
    </source>
</evidence>
<dbReference type="EC" id="3.5.4.4" evidence="1"/>
<dbReference type="EMBL" id="CU928160">
    <property type="protein sequence ID" value="CAQ98531.1"/>
    <property type="molecule type" value="Genomic_DNA"/>
</dbReference>
<dbReference type="RefSeq" id="WP_000567490.1">
    <property type="nucleotide sequence ID" value="NC_011741.1"/>
</dbReference>
<dbReference type="SMR" id="B7M0H9"/>
<dbReference type="GeneID" id="75204467"/>
<dbReference type="KEGG" id="ecr:ECIAI1_1674"/>
<dbReference type="HOGENOM" id="CLU_039228_0_2_6"/>
<dbReference type="GO" id="GO:0005829">
    <property type="term" value="C:cytosol"/>
    <property type="evidence" value="ECO:0007669"/>
    <property type="project" value="TreeGrafter"/>
</dbReference>
<dbReference type="GO" id="GO:0046936">
    <property type="term" value="F:2'-deoxyadenosine deaminase activity"/>
    <property type="evidence" value="ECO:0007669"/>
    <property type="project" value="RHEA"/>
</dbReference>
<dbReference type="GO" id="GO:0004000">
    <property type="term" value="F:adenosine deaminase activity"/>
    <property type="evidence" value="ECO:0007669"/>
    <property type="project" value="UniProtKB-UniRule"/>
</dbReference>
<dbReference type="GO" id="GO:0008270">
    <property type="term" value="F:zinc ion binding"/>
    <property type="evidence" value="ECO:0007669"/>
    <property type="project" value="UniProtKB-UniRule"/>
</dbReference>
<dbReference type="GO" id="GO:0006154">
    <property type="term" value="P:adenosine catabolic process"/>
    <property type="evidence" value="ECO:0007669"/>
    <property type="project" value="TreeGrafter"/>
</dbReference>
<dbReference type="GO" id="GO:0043103">
    <property type="term" value="P:hypoxanthine salvage"/>
    <property type="evidence" value="ECO:0007669"/>
    <property type="project" value="TreeGrafter"/>
</dbReference>
<dbReference type="GO" id="GO:0046103">
    <property type="term" value="P:inosine biosynthetic process"/>
    <property type="evidence" value="ECO:0007669"/>
    <property type="project" value="TreeGrafter"/>
</dbReference>
<dbReference type="GO" id="GO:0009117">
    <property type="term" value="P:nucleotide metabolic process"/>
    <property type="evidence" value="ECO:0007669"/>
    <property type="project" value="UniProtKB-KW"/>
</dbReference>
<dbReference type="GO" id="GO:0009168">
    <property type="term" value="P:purine ribonucleoside monophosphate biosynthetic process"/>
    <property type="evidence" value="ECO:0007669"/>
    <property type="project" value="UniProtKB-UniRule"/>
</dbReference>
<dbReference type="CDD" id="cd01320">
    <property type="entry name" value="ADA"/>
    <property type="match status" value="1"/>
</dbReference>
<dbReference type="FunFam" id="3.20.20.140:FF:000009">
    <property type="entry name" value="Adenosine deaminase"/>
    <property type="match status" value="1"/>
</dbReference>
<dbReference type="Gene3D" id="3.20.20.140">
    <property type="entry name" value="Metal-dependent hydrolases"/>
    <property type="match status" value="1"/>
</dbReference>
<dbReference type="HAMAP" id="MF_00540">
    <property type="entry name" value="A_deaminase"/>
    <property type="match status" value="1"/>
</dbReference>
<dbReference type="InterPro" id="IPR006650">
    <property type="entry name" value="A/AMP_deam_AS"/>
</dbReference>
<dbReference type="InterPro" id="IPR028893">
    <property type="entry name" value="A_deaminase"/>
</dbReference>
<dbReference type="InterPro" id="IPR001365">
    <property type="entry name" value="A_deaminase_dom"/>
</dbReference>
<dbReference type="InterPro" id="IPR006330">
    <property type="entry name" value="Ado/ade_deaminase"/>
</dbReference>
<dbReference type="InterPro" id="IPR032466">
    <property type="entry name" value="Metal_Hydrolase"/>
</dbReference>
<dbReference type="NCBIfam" id="TIGR01430">
    <property type="entry name" value="aden_deam"/>
    <property type="match status" value="1"/>
</dbReference>
<dbReference type="NCBIfam" id="NF006846">
    <property type="entry name" value="PRK09358.1-1"/>
    <property type="match status" value="1"/>
</dbReference>
<dbReference type="PANTHER" id="PTHR11409">
    <property type="entry name" value="ADENOSINE DEAMINASE"/>
    <property type="match status" value="1"/>
</dbReference>
<dbReference type="PANTHER" id="PTHR11409:SF43">
    <property type="entry name" value="ADENOSINE DEAMINASE"/>
    <property type="match status" value="1"/>
</dbReference>
<dbReference type="Pfam" id="PF00962">
    <property type="entry name" value="A_deaminase"/>
    <property type="match status" value="1"/>
</dbReference>
<dbReference type="SUPFAM" id="SSF51556">
    <property type="entry name" value="Metallo-dependent hydrolases"/>
    <property type="match status" value="1"/>
</dbReference>
<dbReference type="PROSITE" id="PS00485">
    <property type="entry name" value="A_DEAMINASE"/>
    <property type="match status" value="1"/>
</dbReference>
<reference key="1">
    <citation type="journal article" date="2009" name="PLoS Genet.">
        <title>Organised genome dynamics in the Escherichia coli species results in highly diverse adaptive paths.</title>
        <authorList>
            <person name="Touchon M."/>
            <person name="Hoede C."/>
            <person name="Tenaillon O."/>
            <person name="Barbe V."/>
            <person name="Baeriswyl S."/>
            <person name="Bidet P."/>
            <person name="Bingen E."/>
            <person name="Bonacorsi S."/>
            <person name="Bouchier C."/>
            <person name="Bouvet O."/>
            <person name="Calteau A."/>
            <person name="Chiapello H."/>
            <person name="Clermont O."/>
            <person name="Cruveiller S."/>
            <person name="Danchin A."/>
            <person name="Diard M."/>
            <person name="Dossat C."/>
            <person name="Karoui M.E."/>
            <person name="Frapy E."/>
            <person name="Garry L."/>
            <person name="Ghigo J.M."/>
            <person name="Gilles A.M."/>
            <person name="Johnson J."/>
            <person name="Le Bouguenec C."/>
            <person name="Lescat M."/>
            <person name="Mangenot S."/>
            <person name="Martinez-Jehanne V."/>
            <person name="Matic I."/>
            <person name="Nassif X."/>
            <person name="Oztas S."/>
            <person name="Petit M.A."/>
            <person name="Pichon C."/>
            <person name="Rouy Z."/>
            <person name="Ruf C.S."/>
            <person name="Schneider D."/>
            <person name="Tourret J."/>
            <person name="Vacherie B."/>
            <person name="Vallenet D."/>
            <person name="Medigue C."/>
            <person name="Rocha E.P.C."/>
            <person name="Denamur E."/>
        </authorList>
    </citation>
    <scope>NUCLEOTIDE SEQUENCE [LARGE SCALE GENOMIC DNA]</scope>
    <source>
        <strain>IAI1</strain>
    </source>
</reference>
<protein>
    <recommendedName>
        <fullName evidence="1">Adenosine deaminase</fullName>
        <ecNumber evidence="1">3.5.4.4</ecNumber>
    </recommendedName>
    <alternativeName>
        <fullName evidence="1">Adenosine aminohydrolase</fullName>
    </alternativeName>
</protein>
<feature type="chain" id="PRO_1000128842" description="Adenosine deaminase">
    <location>
        <begin position="1"/>
        <end position="333"/>
    </location>
</feature>
<feature type="active site" description="Proton donor" evidence="1">
    <location>
        <position position="200"/>
    </location>
</feature>
<feature type="binding site" evidence="1">
    <location>
        <position position="12"/>
    </location>
    <ligand>
        <name>Zn(2+)</name>
        <dbReference type="ChEBI" id="CHEBI:29105"/>
        <note>catalytic</note>
    </ligand>
</feature>
<feature type="binding site" evidence="1">
    <location>
        <position position="14"/>
    </location>
    <ligand>
        <name>substrate</name>
    </ligand>
</feature>
<feature type="binding site" evidence="1">
    <location>
        <position position="14"/>
    </location>
    <ligand>
        <name>Zn(2+)</name>
        <dbReference type="ChEBI" id="CHEBI:29105"/>
        <note>catalytic</note>
    </ligand>
</feature>
<feature type="binding site" evidence="1">
    <location>
        <position position="16"/>
    </location>
    <ligand>
        <name>substrate</name>
    </ligand>
</feature>
<feature type="binding site" evidence="1">
    <location>
        <position position="170"/>
    </location>
    <ligand>
        <name>substrate</name>
    </ligand>
</feature>
<feature type="binding site" evidence="1">
    <location>
        <position position="197"/>
    </location>
    <ligand>
        <name>Zn(2+)</name>
        <dbReference type="ChEBI" id="CHEBI:29105"/>
        <note>catalytic</note>
    </ligand>
</feature>
<feature type="binding site" evidence="1">
    <location>
        <position position="278"/>
    </location>
    <ligand>
        <name>Zn(2+)</name>
        <dbReference type="ChEBI" id="CHEBI:29105"/>
        <note>catalytic</note>
    </ligand>
</feature>
<feature type="binding site" evidence="1">
    <location>
        <position position="279"/>
    </location>
    <ligand>
        <name>substrate</name>
    </ligand>
</feature>
<feature type="site" description="Important for catalytic activity" evidence="1">
    <location>
        <position position="221"/>
    </location>
</feature>
<keyword id="KW-0378">Hydrolase</keyword>
<keyword id="KW-0479">Metal-binding</keyword>
<keyword id="KW-0546">Nucleotide metabolism</keyword>
<keyword id="KW-0862">Zinc</keyword>
<proteinExistence type="inferred from homology"/>
<organism>
    <name type="scientific">Escherichia coli O8 (strain IAI1)</name>
    <dbReference type="NCBI Taxonomy" id="585034"/>
    <lineage>
        <taxon>Bacteria</taxon>
        <taxon>Pseudomonadati</taxon>
        <taxon>Pseudomonadota</taxon>
        <taxon>Gammaproteobacteria</taxon>
        <taxon>Enterobacterales</taxon>
        <taxon>Enterobacteriaceae</taxon>
        <taxon>Escherichia</taxon>
    </lineage>
</organism>
<accession>B7M0H9</accession>
<name>ADD_ECO8A</name>
<comment type="function">
    <text evidence="1">Catalyzes the hydrolytic deamination of adenosine and 2-deoxyadenosine.</text>
</comment>
<comment type="catalytic activity">
    <reaction evidence="1">
        <text>adenosine + H2O + H(+) = inosine + NH4(+)</text>
        <dbReference type="Rhea" id="RHEA:24408"/>
        <dbReference type="ChEBI" id="CHEBI:15377"/>
        <dbReference type="ChEBI" id="CHEBI:15378"/>
        <dbReference type="ChEBI" id="CHEBI:16335"/>
        <dbReference type="ChEBI" id="CHEBI:17596"/>
        <dbReference type="ChEBI" id="CHEBI:28938"/>
        <dbReference type="EC" id="3.5.4.4"/>
    </reaction>
    <physiologicalReaction direction="left-to-right" evidence="1">
        <dbReference type="Rhea" id="RHEA:24409"/>
    </physiologicalReaction>
</comment>
<comment type="catalytic activity">
    <reaction evidence="1">
        <text>2'-deoxyadenosine + H2O + H(+) = 2'-deoxyinosine + NH4(+)</text>
        <dbReference type="Rhea" id="RHEA:28190"/>
        <dbReference type="ChEBI" id="CHEBI:15377"/>
        <dbReference type="ChEBI" id="CHEBI:15378"/>
        <dbReference type="ChEBI" id="CHEBI:17256"/>
        <dbReference type="ChEBI" id="CHEBI:28938"/>
        <dbReference type="ChEBI" id="CHEBI:28997"/>
        <dbReference type="EC" id="3.5.4.4"/>
    </reaction>
    <physiologicalReaction direction="left-to-right" evidence="1">
        <dbReference type="Rhea" id="RHEA:28191"/>
    </physiologicalReaction>
</comment>
<comment type="cofactor">
    <cofactor evidence="1">
        <name>Zn(2+)</name>
        <dbReference type="ChEBI" id="CHEBI:29105"/>
    </cofactor>
    <text evidence="1">Binds 1 zinc ion per subunit.</text>
</comment>
<comment type="similarity">
    <text evidence="1">Belongs to the metallo-dependent hydrolases superfamily. Adenosine and AMP deaminases family. Adenosine deaminase subfamily.</text>
</comment>
<gene>
    <name evidence="1" type="primary">add</name>
    <name type="ordered locus">ECIAI1_1674</name>
</gene>
<sequence length="333" mass="36397">MIDTTLPLTDIHRHLDGNIRPQTILELGRQYNISLPAQSLETLIPHVQVIANEPDLVSFLTKLDWGVKVLASLDACRRVAFENIEDAARHGLHYVELRFSPGYMAMAHQLPVAGVVEAVIDGVREGCRTFGVQAKLIGIMSRTFGEAACQQELEAFLAHRDQITALDLAGDELGFPGSLFLSHFNRARDAGWHITVHAGEAAGPESIWQAIRELGAERIGHGVKAIEDRALMDFLAEQQIGIESCLTSNIQTSTVAELAAHPLKTFLEHGIRASINTDDPGVQGVDIIHEYTVAAPAAGLSREQIRQAQINGLEMAFLSAEEKRALREKVAAK</sequence>